<keyword id="KW-0067">ATP-binding</keyword>
<keyword id="KW-0436">Ligase</keyword>
<keyword id="KW-0547">Nucleotide-binding</keyword>
<keyword id="KW-0648">Protein biosynthesis</keyword>
<reference key="1">
    <citation type="submission" date="2009-01" db="EMBL/GenBank/DDBJ databases">
        <title>Complete sequence of Chloroflexus sp. Y-400-fl.</title>
        <authorList>
            <consortium name="US DOE Joint Genome Institute"/>
            <person name="Lucas S."/>
            <person name="Copeland A."/>
            <person name="Lapidus A."/>
            <person name="Glavina del Rio T."/>
            <person name="Dalin E."/>
            <person name="Tice H."/>
            <person name="Bruce D."/>
            <person name="Goodwin L."/>
            <person name="Pitluck S."/>
            <person name="Sims D."/>
            <person name="Kiss H."/>
            <person name="Brettin T."/>
            <person name="Detter J.C."/>
            <person name="Han C."/>
            <person name="Larimer F."/>
            <person name="Land M."/>
            <person name="Hauser L."/>
            <person name="Kyrpides N."/>
            <person name="Ovchinnikova G."/>
            <person name="Bryant D.A."/>
            <person name="Richardson P."/>
        </authorList>
    </citation>
    <scope>NUCLEOTIDE SEQUENCE [LARGE SCALE GENOMIC DNA]</scope>
    <source>
        <strain>ATCC 29364 / DSM 637 / Y-400-fl</strain>
    </source>
</reference>
<feature type="chain" id="PRO_1000203028" description="Glutamyl-tRNA(Gln) amidotransferase subunit A">
    <location>
        <begin position="1"/>
        <end position="487"/>
    </location>
</feature>
<feature type="active site" description="Charge relay system" evidence="1">
    <location>
        <position position="80"/>
    </location>
</feature>
<feature type="active site" description="Charge relay system" evidence="1">
    <location>
        <position position="155"/>
    </location>
</feature>
<feature type="active site" description="Acyl-ester intermediate" evidence="1">
    <location>
        <position position="179"/>
    </location>
</feature>
<organism>
    <name type="scientific">Chloroflexus aurantiacus (strain ATCC 29364 / DSM 637 / Y-400-fl)</name>
    <dbReference type="NCBI Taxonomy" id="480224"/>
    <lineage>
        <taxon>Bacteria</taxon>
        <taxon>Bacillati</taxon>
        <taxon>Chloroflexota</taxon>
        <taxon>Chloroflexia</taxon>
        <taxon>Chloroflexales</taxon>
        <taxon>Chloroflexineae</taxon>
        <taxon>Chloroflexaceae</taxon>
        <taxon>Chloroflexus</taxon>
    </lineage>
</organism>
<proteinExistence type="inferred from homology"/>
<evidence type="ECO:0000255" key="1">
    <source>
        <dbReference type="HAMAP-Rule" id="MF_00120"/>
    </source>
</evidence>
<gene>
    <name evidence="1" type="primary">gatA</name>
    <name type="ordered locus">Chy400_1855</name>
</gene>
<name>GATA_CHLSY</name>
<accession>B9LER8</accession>
<comment type="function">
    <text evidence="1">Allows the formation of correctly charged Gln-tRNA(Gln) through the transamidation of misacylated Glu-tRNA(Gln) in organisms which lack glutaminyl-tRNA synthetase. The reaction takes place in the presence of glutamine and ATP through an activated gamma-phospho-Glu-tRNA(Gln).</text>
</comment>
<comment type="catalytic activity">
    <reaction evidence="1">
        <text>L-glutamyl-tRNA(Gln) + L-glutamine + ATP + H2O = L-glutaminyl-tRNA(Gln) + L-glutamate + ADP + phosphate + H(+)</text>
        <dbReference type="Rhea" id="RHEA:17521"/>
        <dbReference type="Rhea" id="RHEA-COMP:9681"/>
        <dbReference type="Rhea" id="RHEA-COMP:9684"/>
        <dbReference type="ChEBI" id="CHEBI:15377"/>
        <dbReference type="ChEBI" id="CHEBI:15378"/>
        <dbReference type="ChEBI" id="CHEBI:29985"/>
        <dbReference type="ChEBI" id="CHEBI:30616"/>
        <dbReference type="ChEBI" id="CHEBI:43474"/>
        <dbReference type="ChEBI" id="CHEBI:58359"/>
        <dbReference type="ChEBI" id="CHEBI:78520"/>
        <dbReference type="ChEBI" id="CHEBI:78521"/>
        <dbReference type="ChEBI" id="CHEBI:456216"/>
        <dbReference type="EC" id="6.3.5.7"/>
    </reaction>
</comment>
<comment type="subunit">
    <text evidence="1">Heterotrimer of A, B and C subunits.</text>
</comment>
<comment type="similarity">
    <text evidence="1">Belongs to the amidase family. GatA subfamily.</text>
</comment>
<sequence>MTELHHLTVTAAQAALAAGDITAVELTEACLARINATEPTIRAFLHLTPDAALAAARAADERRQQGRSLGPLDGIPIAIKDVICTDGVPTTAGSRILAGFRPPYNATVIERLVAAGAVLVGKLNCDEFAMGSSTENSAYQITTNPWDPTRVPGGSSGGSAAAVAAGQVPATLGTDTGGSIRQPAALCGISGLKPTYGRVSRYGLIAYGSSLDQIGPMAWTVADLAVLLNVIAGHDPRDGTSAPIDTPDYTTALTGDIRGLRIGIPREYFVEGMEPGVESATRTAIEVLRDLGAILVDVSLPHTRYALPTYYIIAPAEASANLARFDGVRYGFRAEGETMWEQIEQTRGQGFGPEVRRRIMLGTYALSAGYYDAYYRRAQQVRTLIKRDFEQVFTQVDLLAAPTSPTVAFPIGQKINDPLAMYLSDVCTLPINLAGVPALVVPCGFSEGLPVGLQLIGRPFDEATLLRVGDAYQRLTEWHTQRPRLVV</sequence>
<dbReference type="EC" id="6.3.5.7" evidence="1"/>
<dbReference type="EMBL" id="CP001364">
    <property type="protein sequence ID" value="ACM53262.1"/>
    <property type="molecule type" value="Genomic_DNA"/>
</dbReference>
<dbReference type="SMR" id="B9LER8"/>
<dbReference type="KEGG" id="chl:Chy400_1855"/>
<dbReference type="HOGENOM" id="CLU_009600_0_3_0"/>
<dbReference type="OrthoDB" id="9811471at2"/>
<dbReference type="GO" id="GO:0030956">
    <property type="term" value="C:glutamyl-tRNA(Gln) amidotransferase complex"/>
    <property type="evidence" value="ECO:0007669"/>
    <property type="project" value="InterPro"/>
</dbReference>
<dbReference type="GO" id="GO:0005524">
    <property type="term" value="F:ATP binding"/>
    <property type="evidence" value="ECO:0007669"/>
    <property type="project" value="UniProtKB-KW"/>
</dbReference>
<dbReference type="GO" id="GO:0050567">
    <property type="term" value="F:glutaminyl-tRNA synthase (glutamine-hydrolyzing) activity"/>
    <property type="evidence" value="ECO:0007669"/>
    <property type="project" value="UniProtKB-UniRule"/>
</dbReference>
<dbReference type="GO" id="GO:0006412">
    <property type="term" value="P:translation"/>
    <property type="evidence" value="ECO:0007669"/>
    <property type="project" value="UniProtKB-UniRule"/>
</dbReference>
<dbReference type="Gene3D" id="3.90.1300.10">
    <property type="entry name" value="Amidase signature (AS) domain"/>
    <property type="match status" value="1"/>
</dbReference>
<dbReference type="HAMAP" id="MF_00120">
    <property type="entry name" value="GatA"/>
    <property type="match status" value="1"/>
</dbReference>
<dbReference type="InterPro" id="IPR000120">
    <property type="entry name" value="Amidase"/>
</dbReference>
<dbReference type="InterPro" id="IPR020556">
    <property type="entry name" value="Amidase_CS"/>
</dbReference>
<dbReference type="InterPro" id="IPR023631">
    <property type="entry name" value="Amidase_dom"/>
</dbReference>
<dbReference type="InterPro" id="IPR036928">
    <property type="entry name" value="AS_sf"/>
</dbReference>
<dbReference type="InterPro" id="IPR004412">
    <property type="entry name" value="GatA"/>
</dbReference>
<dbReference type="NCBIfam" id="TIGR00132">
    <property type="entry name" value="gatA"/>
    <property type="match status" value="1"/>
</dbReference>
<dbReference type="PANTHER" id="PTHR11895:SF151">
    <property type="entry name" value="GLUTAMYL-TRNA(GLN) AMIDOTRANSFERASE SUBUNIT A"/>
    <property type="match status" value="1"/>
</dbReference>
<dbReference type="PANTHER" id="PTHR11895">
    <property type="entry name" value="TRANSAMIDASE"/>
    <property type="match status" value="1"/>
</dbReference>
<dbReference type="Pfam" id="PF01425">
    <property type="entry name" value="Amidase"/>
    <property type="match status" value="1"/>
</dbReference>
<dbReference type="PIRSF" id="PIRSF001221">
    <property type="entry name" value="Amidase_fungi"/>
    <property type="match status" value="1"/>
</dbReference>
<dbReference type="SUPFAM" id="SSF75304">
    <property type="entry name" value="Amidase signature (AS) enzymes"/>
    <property type="match status" value="1"/>
</dbReference>
<dbReference type="PROSITE" id="PS00571">
    <property type="entry name" value="AMIDASES"/>
    <property type="match status" value="1"/>
</dbReference>
<protein>
    <recommendedName>
        <fullName evidence="1">Glutamyl-tRNA(Gln) amidotransferase subunit A</fullName>
        <shortName evidence="1">Glu-ADT subunit A</shortName>
        <ecNumber evidence="1">6.3.5.7</ecNumber>
    </recommendedName>
</protein>